<protein>
    <recommendedName>
        <fullName evidence="1">Trigger factor</fullName>
        <shortName evidence="1">TF</shortName>
        <ecNumber evidence="1">5.2.1.8</ecNumber>
    </recommendedName>
    <alternativeName>
        <fullName evidence="1">PPIase</fullName>
    </alternativeName>
</protein>
<dbReference type="EC" id="5.2.1.8" evidence="1"/>
<dbReference type="EMBL" id="CP000612">
    <property type="protein sequence ID" value="ABO51073.1"/>
    <property type="molecule type" value="Genomic_DNA"/>
</dbReference>
<dbReference type="RefSeq" id="WP_011878871.1">
    <property type="nucleotide sequence ID" value="NC_009253.1"/>
</dbReference>
<dbReference type="SMR" id="A4J7M0"/>
<dbReference type="STRING" id="349161.Dred_2563"/>
<dbReference type="KEGG" id="drm:Dred_2563"/>
<dbReference type="eggNOG" id="COG0544">
    <property type="taxonomic scope" value="Bacteria"/>
</dbReference>
<dbReference type="HOGENOM" id="CLU_033058_3_2_9"/>
<dbReference type="OrthoDB" id="9767721at2"/>
<dbReference type="Proteomes" id="UP000001556">
    <property type="component" value="Chromosome"/>
</dbReference>
<dbReference type="GO" id="GO:0005737">
    <property type="term" value="C:cytoplasm"/>
    <property type="evidence" value="ECO:0007669"/>
    <property type="project" value="UniProtKB-SubCell"/>
</dbReference>
<dbReference type="GO" id="GO:0003755">
    <property type="term" value="F:peptidyl-prolyl cis-trans isomerase activity"/>
    <property type="evidence" value="ECO:0007669"/>
    <property type="project" value="UniProtKB-UniRule"/>
</dbReference>
<dbReference type="GO" id="GO:0044183">
    <property type="term" value="F:protein folding chaperone"/>
    <property type="evidence" value="ECO:0007669"/>
    <property type="project" value="TreeGrafter"/>
</dbReference>
<dbReference type="GO" id="GO:0043022">
    <property type="term" value="F:ribosome binding"/>
    <property type="evidence" value="ECO:0007669"/>
    <property type="project" value="TreeGrafter"/>
</dbReference>
<dbReference type="GO" id="GO:0051083">
    <property type="term" value="P:'de novo' cotranslational protein folding"/>
    <property type="evidence" value="ECO:0007669"/>
    <property type="project" value="TreeGrafter"/>
</dbReference>
<dbReference type="GO" id="GO:0051301">
    <property type="term" value="P:cell division"/>
    <property type="evidence" value="ECO:0007669"/>
    <property type="project" value="UniProtKB-KW"/>
</dbReference>
<dbReference type="GO" id="GO:0061077">
    <property type="term" value="P:chaperone-mediated protein folding"/>
    <property type="evidence" value="ECO:0007669"/>
    <property type="project" value="TreeGrafter"/>
</dbReference>
<dbReference type="GO" id="GO:0015031">
    <property type="term" value="P:protein transport"/>
    <property type="evidence" value="ECO:0007669"/>
    <property type="project" value="UniProtKB-UniRule"/>
</dbReference>
<dbReference type="GO" id="GO:0043335">
    <property type="term" value="P:protein unfolding"/>
    <property type="evidence" value="ECO:0007669"/>
    <property type="project" value="TreeGrafter"/>
</dbReference>
<dbReference type="FunFam" id="3.10.50.40:FF:000001">
    <property type="entry name" value="Trigger factor"/>
    <property type="match status" value="1"/>
</dbReference>
<dbReference type="Gene3D" id="3.10.50.40">
    <property type="match status" value="1"/>
</dbReference>
<dbReference type="Gene3D" id="3.30.70.1050">
    <property type="entry name" value="Trigger factor ribosome-binding domain"/>
    <property type="match status" value="1"/>
</dbReference>
<dbReference type="Gene3D" id="1.10.3120.10">
    <property type="entry name" value="Trigger factor, C-terminal domain"/>
    <property type="match status" value="1"/>
</dbReference>
<dbReference type="HAMAP" id="MF_00303">
    <property type="entry name" value="Trigger_factor_Tig"/>
    <property type="match status" value="1"/>
</dbReference>
<dbReference type="InterPro" id="IPR046357">
    <property type="entry name" value="PPIase_dom_sf"/>
</dbReference>
<dbReference type="InterPro" id="IPR001179">
    <property type="entry name" value="PPIase_FKBP_dom"/>
</dbReference>
<dbReference type="InterPro" id="IPR005215">
    <property type="entry name" value="Trig_fac"/>
</dbReference>
<dbReference type="InterPro" id="IPR008880">
    <property type="entry name" value="Trigger_fac_C"/>
</dbReference>
<dbReference type="InterPro" id="IPR037041">
    <property type="entry name" value="Trigger_fac_C_sf"/>
</dbReference>
<dbReference type="InterPro" id="IPR008881">
    <property type="entry name" value="Trigger_fac_ribosome-bd_bac"/>
</dbReference>
<dbReference type="InterPro" id="IPR036611">
    <property type="entry name" value="Trigger_fac_ribosome-bd_sf"/>
</dbReference>
<dbReference type="InterPro" id="IPR027304">
    <property type="entry name" value="Trigger_fact/SurA_dom_sf"/>
</dbReference>
<dbReference type="NCBIfam" id="TIGR00115">
    <property type="entry name" value="tig"/>
    <property type="match status" value="1"/>
</dbReference>
<dbReference type="PANTHER" id="PTHR30560">
    <property type="entry name" value="TRIGGER FACTOR CHAPERONE AND PEPTIDYL-PROLYL CIS/TRANS ISOMERASE"/>
    <property type="match status" value="1"/>
</dbReference>
<dbReference type="PANTHER" id="PTHR30560:SF3">
    <property type="entry name" value="TRIGGER FACTOR-LIKE PROTEIN TIG, CHLOROPLASTIC"/>
    <property type="match status" value="1"/>
</dbReference>
<dbReference type="Pfam" id="PF00254">
    <property type="entry name" value="FKBP_C"/>
    <property type="match status" value="1"/>
</dbReference>
<dbReference type="Pfam" id="PF05698">
    <property type="entry name" value="Trigger_C"/>
    <property type="match status" value="1"/>
</dbReference>
<dbReference type="Pfam" id="PF05697">
    <property type="entry name" value="Trigger_N"/>
    <property type="match status" value="1"/>
</dbReference>
<dbReference type="PIRSF" id="PIRSF003095">
    <property type="entry name" value="Trigger_factor"/>
    <property type="match status" value="1"/>
</dbReference>
<dbReference type="SUPFAM" id="SSF54534">
    <property type="entry name" value="FKBP-like"/>
    <property type="match status" value="1"/>
</dbReference>
<dbReference type="SUPFAM" id="SSF109998">
    <property type="entry name" value="Triger factor/SurA peptide-binding domain-like"/>
    <property type="match status" value="1"/>
</dbReference>
<dbReference type="SUPFAM" id="SSF102735">
    <property type="entry name" value="Trigger factor ribosome-binding domain"/>
    <property type="match status" value="1"/>
</dbReference>
<dbReference type="PROSITE" id="PS50059">
    <property type="entry name" value="FKBP_PPIASE"/>
    <property type="match status" value="1"/>
</dbReference>
<proteinExistence type="inferred from homology"/>
<keyword id="KW-0131">Cell cycle</keyword>
<keyword id="KW-0132">Cell division</keyword>
<keyword id="KW-0143">Chaperone</keyword>
<keyword id="KW-0963">Cytoplasm</keyword>
<keyword id="KW-0413">Isomerase</keyword>
<keyword id="KW-1185">Reference proteome</keyword>
<keyword id="KW-0697">Rotamase</keyword>
<organism>
    <name type="scientific">Desulforamulus reducens (strain ATCC BAA-1160 / DSM 100696 / MI-1)</name>
    <name type="common">Desulfotomaculum reducens</name>
    <dbReference type="NCBI Taxonomy" id="349161"/>
    <lineage>
        <taxon>Bacteria</taxon>
        <taxon>Bacillati</taxon>
        <taxon>Bacillota</taxon>
        <taxon>Clostridia</taxon>
        <taxon>Eubacteriales</taxon>
        <taxon>Peptococcaceae</taxon>
        <taxon>Desulforamulus</taxon>
    </lineage>
</organism>
<gene>
    <name evidence="1" type="primary">tig</name>
    <name type="ordered locus">Dred_2563</name>
</gene>
<name>TIG_DESRM</name>
<evidence type="ECO:0000255" key="1">
    <source>
        <dbReference type="HAMAP-Rule" id="MF_00303"/>
    </source>
</evidence>
<sequence length="435" mass="48757">MKATAERIEKNTVLLEIEVEQERVDQALNQAYKKVVKQVNVPGFRKGKAPRKMVERFVGTETLFGEAVEIIIPDAYMEALKETATEPIDQPKIDIVQGEAGKALIFKATVEVKPEVTLGEYKGLEVTKASSEVTDEDVEKELARLQDRHAKLVTLEEGEIKKDDITLIDFTGYVDGEAFEGGHAENYSLTVGSGTFIPGFEEQLLGVKLGEEKEVNVTFPEEYHAENLAGKPATFKVKINEIKRKELASLDDEFAKDVSEFDTLDELKSDIRKKLMEVAERTAKSSVENGAVEAAVEKATVEIPQAMISQKVEEMLNSMGQRLAQQGINLDQYFQYTNTSMDDMRQRMRPDAEKNVKNELVLDAIAKVENITATAEETNEEIQKIAEYVKQDAEIVRKTLELQGELGHINQDIARRKVVQFLVENAKVVEGTKED</sequence>
<comment type="function">
    <text evidence="1">Involved in protein export. Acts as a chaperone by maintaining the newly synthesized protein in an open conformation. Functions as a peptidyl-prolyl cis-trans isomerase.</text>
</comment>
<comment type="catalytic activity">
    <reaction evidence="1">
        <text>[protein]-peptidylproline (omega=180) = [protein]-peptidylproline (omega=0)</text>
        <dbReference type="Rhea" id="RHEA:16237"/>
        <dbReference type="Rhea" id="RHEA-COMP:10747"/>
        <dbReference type="Rhea" id="RHEA-COMP:10748"/>
        <dbReference type="ChEBI" id="CHEBI:83833"/>
        <dbReference type="ChEBI" id="CHEBI:83834"/>
        <dbReference type="EC" id="5.2.1.8"/>
    </reaction>
</comment>
<comment type="subcellular location">
    <subcellularLocation>
        <location>Cytoplasm</location>
    </subcellularLocation>
    <text evidence="1">About half TF is bound to the ribosome near the polypeptide exit tunnel while the other half is free in the cytoplasm.</text>
</comment>
<comment type="domain">
    <text evidence="1">Consists of 3 domains; the N-terminus binds the ribosome, the middle domain has PPIase activity, while the C-terminus has intrinsic chaperone activity on its own.</text>
</comment>
<comment type="similarity">
    <text evidence="1">Belongs to the FKBP-type PPIase family. Tig subfamily.</text>
</comment>
<feature type="chain" id="PRO_1000071986" description="Trigger factor">
    <location>
        <begin position="1"/>
        <end position="435"/>
    </location>
</feature>
<feature type="domain" description="PPIase FKBP-type" evidence="1">
    <location>
        <begin position="163"/>
        <end position="248"/>
    </location>
</feature>
<accession>A4J7M0</accession>
<reference key="1">
    <citation type="submission" date="2007-03" db="EMBL/GenBank/DDBJ databases">
        <title>Complete sequence of Desulfotomaculum reducens MI-1.</title>
        <authorList>
            <consortium name="US DOE Joint Genome Institute"/>
            <person name="Copeland A."/>
            <person name="Lucas S."/>
            <person name="Lapidus A."/>
            <person name="Barry K."/>
            <person name="Detter J.C."/>
            <person name="Glavina del Rio T."/>
            <person name="Hammon N."/>
            <person name="Israni S."/>
            <person name="Dalin E."/>
            <person name="Tice H."/>
            <person name="Pitluck S."/>
            <person name="Sims D."/>
            <person name="Brettin T."/>
            <person name="Bruce D."/>
            <person name="Han C."/>
            <person name="Tapia R."/>
            <person name="Schmutz J."/>
            <person name="Larimer F."/>
            <person name="Land M."/>
            <person name="Hauser L."/>
            <person name="Kyrpides N."/>
            <person name="Kim E."/>
            <person name="Tebo B.M."/>
            <person name="Richardson P."/>
        </authorList>
    </citation>
    <scope>NUCLEOTIDE SEQUENCE [LARGE SCALE GENOMIC DNA]</scope>
    <source>
        <strain>ATCC BAA-1160 / DSM 100696 / MI-1</strain>
    </source>
</reference>